<comment type="function">
    <text evidence="1">This protein is involved in the repair of mismatches in DNA. It is possible that it carries out the mismatch recognition step. This protein has a weak ATPase activity.</text>
</comment>
<comment type="similarity">
    <text evidence="1">Belongs to the DNA mismatch repair MutS family.</text>
</comment>
<sequence length="859" mass="94598">MTADLSQHTPMMQQYLGIKAEHPDQLVFYRMGDFYELFFGDAQKAARLLDITLTQRGQSAGKPIPMAGIPYHAAENYLARLVKLGESVAIAEQIGDPALAKGPVERKVVRIVTPGTVSDEALLEERRDNLLCAVFDHNNQYGCASLDLAAGRFLVTQVEGAEQLQALLERWSPAELLISEEHGLPGRWSDRPGTRKRPSWEFDEDAARRQLCQQFQVQDLAGFGEPSPVAVSAAGALLGYAKETQRGELPHITGLTVESFDDAVAMDAATRRNLELTETLDGQEQHTLAWVLDSTKTAMGARLLKRWVHQPLRNRTTLTQRQDQIDALRQGWCFESARDVLNDIGDMERILGRVALRSARPRDLTRLHASLKALPPLIGTLPAADCFCELIERIGQFPNQVELLGTAVIENPPMLIRDGGVIAPGYSEELDELRSISENAGAILVDIETRERERTQLSTLRVKYNRVHGYYIELSRRESDQAPTDYQRRQTLKNAERFITPELKEFEDKALSASSKALALEKRLYEALLEKVAADLHALQRSAAAVAELDVLASLAERAEALNWVLPQLVDDEAIIEIVDGRHPVVEQVLDDAFVPNSLHLDNARRMVIITGPNMGGKSTYMRQTALIALLAHLGSCVPAASARIGSLDRIFTRIGSSDDLAGGRSTFMVEMSETANILNNATAQSLVLMDEIGRGTSTFDGLSLAWAAAEHLARNLKSFTLFATHYFELTQLPEQLPGIYNAHLTASEHDNRIVFLHRVQEGPASRSYGLQVAQLAGVPSSVIHRAGEKLRELEQSKPLAPSATPPSSYAAPSPAAAPAQASLFNEPNAIELALTDLDPDELTPKQALEALYTLKKLT</sequence>
<gene>
    <name evidence="1" type="primary">mutS</name>
    <name type="ordered locus">ABO_1809</name>
</gene>
<keyword id="KW-0067">ATP-binding</keyword>
<keyword id="KW-0227">DNA damage</keyword>
<keyword id="KW-0234">DNA repair</keyword>
<keyword id="KW-0238">DNA-binding</keyword>
<keyword id="KW-0547">Nucleotide-binding</keyword>
<keyword id="KW-1185">Reference proteome</keyword>
<organism>
    <name type="scientific">Alcanivorax borkumensis (strain ATCC 700651 / DSM 11573 / NCIMB 13689 / SK2)</name>
    <dbReference type="NCBI Taxonomy" id="393595"/>
    <lineage>
        <taxon>Bacteria</taxon>
        <taxon>Pseudomonadati</taxon>
        <taxon>Pseudomonadota</taxon>
        <taxon>Gammaproteobacteria</taxon>
        <taxon>Oceanospirillales</taxon>
        <taxon>Alcanivoracaceae</taxon>
        <taxon>Alcanivorax</taxon>
    </lineage>
</organism>
<proteinExistence type="inferred from homology"/>
<feature type="chain" id="PRO_0000335107" description="DNA mismatch repair protein MutS">
    <location>
        <begin position="1"/>
        <end position="859"/>
    </location>
</feature>
<feature type="region of interest" description="Disordered" evidence="2">
    <location>
        <begin position="797"/>
        <end position="822"/>
    </location>
</feature>
<feature type="binding site" evidence="1">
    <location>
        <begin position="612"/>
        <end position="619"/>
    </location>
    <ligand>
        <name>ATP</name>
        <dbReference type="ChEBI" id="CHEBI:30616"/>
    </ligand>
</feature>
<evidence type="ECO:0000255" key="1">
    <source>
        <dbReference type="HAMAP-Rule" id="MF_00096"/>
    </source>
</evidence>
<evidence type="ECO:0000256" key="2">
    <source>
        <dbReference type="SAM" id="MobiDB-lite"/>
    </source>
</evidence>
<accession>Q0VNJ1</accession>
<reference key="1">
    <citation type="journal article" date="2006" name="Nat. Biotechnol.">
        <title>Genome sequence of the ubiquitous hydrocarbon-degrading marine bacterium Alcanivorax borkumensis.</title>
        <authorList>
            <person name="Schneiker S."/>
            <person name="Martins dos Santos V.A.P."/>
            <person name="Bartels D."/>
            <person name="Bekel T."/>
            <person name="Brecht M."/>
            <person name="Buhrmester J."/>
            <person name="Chernikova T.N."/>
            <person name="Denaro R."/>
            <person name="Ferrer M."/>
            <person name="Gertler C."/>
            <person name="Goesmann A."/>
            <person name="Golyshina O.V."/>
            <person name="Kaminski F."/>
            <person name="Khachane A.N."/>
            <person name="Lang S."/>
            <person name="Linke B."/>
            <person name="McHardy A.C."/>
            <person name="Meyer F."/>
            <person name="Nechitaylo T."/>
            <person name="Puehler A."/>
            <person name="Regenhardt D."/>
            <person name="Rupp O."/>
            <person name="Sabirova J.S."/>
            <person name="Selbitschka W."/>
            <person name="Yakimov M.M."/>
            <person name="Timmis K.N."/>
            <person name="Vorhoelter F.-J."/>
            <person name="Weidner S."/>
            <person name="Kaiser O."/>
            <person name="Golyshin P.N."/>
        </authorList>
    </citation>
    <scope>NUCLEOTIDE SEQUENCE [LARGE SCALE GENOMIC DNA]</scope>
    <source>
        <strain>ATCC 700651 / DSM 11573 / NCIMB 13689 / SK2</strain>
    </source>
</reference>
<protein>
    <recommendedName>
        <fullName evidence="1">DNA mismatch repair protein MutS</fullName>
    </recommendedName>
</protein>
<dbReference type="EMBL" id="AM286690">
    <property type="protein sequence ID" value="CAL17257.1"/>
    <property type="molecule type" value="Genomic_DNA"/>
</dbReference>
<dbReference type="RefSeq" id="WP_011589090.1">
    <property type="nucleotide sequence ID" value="NC_008260.1"/>
</dbReference>
<dbReference type="SMR" id="Q0VNJ1"/>
<dbReference type="STRING" id="393595.ABO_1809"/>
<dbReference type="KEGG" id="abo:ABO_1809"/>
<dbReference type="eggNOG" id="COG0249">
    <property type="taxonomic scope" value="Bacteria"/>
</dbReference>
<dbReference type="HOGENOM" id="CLU_002472_4_0_6"/>
<dbReference type="Proteomes" id="UP000008871">
    <property type="component" value="Chromosome"/>
</dbReference>
<dbReference type="GO" id="GO:0005829">
    <property type="term" value="C:cytosol"/>
    <property type="evidence" value="ECO:0007669"/>
    <property type="project" value="TreeGrafter"/>
</dbReference>
<dbReference type="GO" id="GO:0005524">
    <property type="term" value="F:ATP binding"/>
    <property type="evidence" value="ECO:0007669"/>
    <property type="project" value="UniProtKB-UniRule"/>
</dbReference>
<dbReference type="GO" id="GO:0140664">
    <property type="term" value="F:ATP-dependent DNA damage sensor activity"/>
    <property type="evidence" value="ECO:0007669"/>
    <property type="project" value="InterPro"/>
</dbReference>
<dbReference type="GO" id="GO:0003684">
    <property type="term" value="F:damaged DNA binding"/>
    <property type="evidence" value="ECO:0007669"/>
    <property type="project" value="UniProtKB-UniRule"/>
</dbReference>
<dbReference type="GO" id="GO:0030983">
    <property type="term" value="F:mismatched DNA binding"/>
    <property type="evidence" value="ECO:0007669"/>
    <property type="project" value="InterPro"/>
</dbReference>
<dbReference type="GO" id="GO:0006298">
    <property type="term" value="P:mismatch repair"/>
    <property type="evidence" value="ECO:0007669"/>
    <property type="project" value="UniProtKB-UniRule"/>
</dbReference>
<dbReference type="CDD" id="cd03284">
    <property type="entry name" value="ABC_MutS1"/>
    <property type="match status" value="1"/>
</dbReference>
<dbReference type="FunFam" id="1.10.1420.10:FF:000002">
    <property type="entry name" value="DNA mismatch repair protein MutS"/>
    <property type="match status" value="1"/>
</dbReference>
<dbReference type="FunFam" id="3.40.1170.10:FF:000001">
    <property type="entry name" value="DNA mismatch repair protein MutS"/>
    <property type="match status" value="1"/>
</dbReference>
<dbReference type="FunFam" id="3.40.50.300:FF:000870">
    <property type="entry name" value="MutS protein homolog 4"/>
    <property type="match status" value="1"/>
</dbReference>
<dbReference type="Gene3D" id="1.10.1420.10">
    <property type="match status" value="2"/>
</dbReference>
<dbReference type="Gene3D" id="6.10.140.430">
    <property type="match status" value="1"/>
</dbReference>
<dbReference type="Gene3D" id="3.40.1170.10">
    <property type="entry name" value="DNA repair protein MutS, domain I"/>
    <property type="match status" value="1"/>
</dbReference>
<dbReference type="Gene3D" id="3.30.420.110">
    <property type="entry name" value="MutS, connector domain"/>
    <property type="match status" value="1"/>
</dbReference>
<dbReference type="Gene3D" id="3.40.50.300">
    <property type="entry name" value="P-loop containing nucleotide triphosphate hydrolases"/>
    <property type="match status" value="1"/>
</dbReference>
<dbReference type="HAMAP" id="MF_00096">
    <property type="entry name" value="MutS"/>
    <property type="match status" value="1"/>
</dbReference>
<dbReference type="InterPro" id="IPR005748">
    <property type="entry name" value="DNA_mismatch_repair_MutS"/>
</dbReference>
<dbReference type="InterPro" id="IPR007695">
    <property type="entry name" value="DNA_mismatch_repair_MutS-lik_N"/>
</dbReference>
<dbReference type="InterPro" id="IPR017261">
    <property type="entry name" value="DNA_mismatch_repair_MutS/MSH"/>
</dbReference>
<dbReference type="InterPro" id="IPR000432">
    <property type="entry name" value="DNA_mismatch_repair_MutS_C"/>
</dbReference>
<dbReference type="InterPro" id="IPR007861">
    <property type="entry name" value="DNA_mismatch_repair_MutS_clamp"/>
</dbReference>
<dbReference type="InterPro" id="IPR007696">
    <property type="entry name" value="DNA_mismatch_repair_MutS_core"/>
</dbReference>
<dbReference type="InterPro" id="IPR016151">
    <property type="entry name" value="DNA_mismatch_repair_MutS_N"/>
</dbReference>
<dbReference type="InterPro" id="IPR036187">
    <property type="entry name" value="DNA_mismatch_repair_MutS_sf"/>
</dbReference>
<dbReference type="InterPro" id="IPR007860">
    <property type="entry name" value="DNA_mmatch_repair_MutS_con_dom"/>
</dbReference>
<dbReference type="InterPro" id="IPR045076">
    <property type="entry name" value="MutS"/>
</dbReference>
<dbReference type="InterPro" id="IPR036678">
    <property type="entry name" value="MutS_con_dom_sf"/>
</dbReference>
<dbReference type="InterPro" id="IPR027417">
    <property type="entry name" value="P-loop_NTPase"/>
</dbReference>
<dbReference type="NCBIfam" id="TIGR01070">
    <property type="entry name" value="mutS1"/>
    <property type="match status" value="1"/>
</dbReference>
<dbReference type="NCBIfam" id="NF003810">
    <property type="entry name" value="PRK05399.1"/>
    <property type="match status" value="1"/>
</dbReference>
<dbReference type="PANTHER" id="PTHR11361:SF34">
    <property type="entry name" value="DNA MISMATCH REPAIR PROTEIN MSH1, MITOCHONDRIAL"/>
    <property type="match status" value="1"/>
</dbReference>
<dbReference type="PANTHER" id="PTHR11361">
    <property type="entry name" value="DNA MISMATCH REPAIR PROTEIN MUTS FAMILY MEMBER"/>
    <property type="match status" value="1"/>
</dbReference>
<dbReference type="Pfam" id="PF01624">
    <property type="entry name" value="MutS_I"/>
    <property type="match status" value="1"/>
</dbReference>
<dbReference type="Pfam" id="PF05188">
    <property type="entry name" value="MutS_II"/>
    <property type="match status" value="1"/>
</dbReference>
<dbReference type="Pfam" id="PF05192">
    <property type="entry name" value="MutS_III"/>
    <property type="match status" value="1"/>
</dbReference>
<dbReference type="Pfam" id="PF05190">
    <property type="entry name" value="MutS_IV"/>
    <property type="match status" value="1"/>
</dbReference>
<dbReference type="Pfam" id="PF00488">
    <property type="entry name" value="MutS_V"/>
    <property type="match status" value="1"/>
</dbReference>
<dbReference type="PIRSF" id="PIRSF037677">
    <property type="entry name" value="DNA_mis_repair_Msh6"/>
    <property type="match status" value="1"/>
</dbReference>
<dbReference type="SMART" id="SM00534">
    <property type="entry name" value="MUTSac"/>
    <property type="match status" value="1"/>
</dbReference>
<dbReference type="SMART" id="SM00533">
    <property type="entry name" value="MUTSd"/>
    <property type="match status" value="1"/>
</dbReference>
<dbReference type="SUPFAM" id="SSF55271">
    <property type="entry name" value="DNA repair protein MutS, domain I"/>
    <property type="match status" value="1"/>
</dbReference>
<dbReference type="SUPFAM" id="SSF53150">
    <property type="entry name" value="DNA repair protein MutS, domain II"/>
    <property type="match status" value="1"/>
</dbReference>
<dbReference type="SUPFAM" id="SSF48334">
    <property type="entry name" value="DNA repair protein MutS, domain III"/>
    <property type="match status" value="1"/>
</dbReference>
<dbReference type="SUPFAM" id="SSF52540">
    <property type="entry name" value="P-loop containing nucleoside triphosphate hydrolases"/>
    <property type="match status" value="1"/>
</dbReference>
<dbReference type="PROSITE" id="PS00486">
    <property type="entry name" value="DNA_MISMATCH_REPAIR_2"/>
    <property type="match status" value="1"/>
</dbReference>
<name>MUTS_ALCBS</name>